<accession>B3PY57</accession>
<protein>
    <recommendedName>
        <fullName evidence="1">NADH-quinone oxidoreductase subunit B 2</fullName>
        <ecNumber evidence="1">7.1.1.-</ecNumber>
    </recommendedName>
    <alternativeName>
        <fullName evidence="1">NADH dehydrogenase I subunit B 2</fullName>
    </alternativeName>
    <alternativeName>
        <fullName evidence="1">NDH-1 subunit B 2</fullName>
    </alternativeName>
</protein>
<organism>
    <name type="scientific">Rhizobium etli (strain CIAT 652)</name>
    <dbReference type="NCBI Taxonomy" id="491916"/>
    <lineage>
        <taxon>Bacteria</taxon>
        <taxon>Pseudomonadati</taxon>
        <taxon>Pseudomonadota</taxon>
        <taxon>Alphaproteobacteria</taxon>
        <taxon>Hyphomicrobiales</taxon>
        <taxon>Rhizobiaceae</taxon>
        <taxon>Rhizobium/Agrobacterium group</taxon>
        <taxon>Rhizobium</taxon>
    </lineage>
</organism>
<evidence type="ECO:0000255" key="1">
    <source>
        <dbReference type="HAMAP-Rule" id="MF_01356"/>
    </source>
</evidence>
<keyword id="KW-0004">4Fe-4S</keyword>
<keyword id="KW-0997">Cell inner membrane</keyword>
<keyword id="KW-1003">Cell membrane</keyword>
<keyword id="KW-0408">Iron</keyword>
<keyword id="KW-0411">Iron-sulfur</keyword>
<keyword id="KW-0472">Membrane</keyword>
<keyword id="KW-0479">Metal-binding</keyword>
<keyword id="KW-0520">NAD</keyword>
<keyword id="KW-0874">Quinone</keyword>
<keyword id="KW-1278">Translocase</keyword>
<keyword id="KW-0813">Transport</keyword>
<keyword id="KW-0830">Ubiquinone</keyword>
<comment type="function">
    <text evidence="1">NDH-1 shuttles electrons from NADH, via FMN and iron-sulfur (Fe-S) centers, to quinones in the respiratory chain. The immediate electron acceptor for the enzyme in this species is believed to be ubiquinone. Couples the redox reaction to proton translocation (for every two electrons transferred, four hydrogen ions are translocated across the cytoplasmic membrane), and thus conserves the redox energy in a proton gradient.</text>
</comment>
<comment type="catalytic activity">
    <reaction evidence="1">
        <text>a quinone + NADH + 5 H(+)(in) = a quinol + NAD(+) + 4 H(+)(out)</text>
        <dbReference type="Rhea" id="RHEA:57888"/>
        <dbReference type="ChEBI" id="CHEBI:15378"/>
        <dbReference type="ChEBI" id="CHEBI:24646"/>
        <dbReference type="ChEBI" id="CHEBI:57540"/>
        <dbReference type="ChEBI" id="CHEBI:57945"/>
        <dbReference type="ChEBI" id="CHEBI:132124"/>
    </reaction>
</comment>
<comment type="cofactor">
    <cofactor evidence="1">
        <name>[4Fe-4S] cluster</name>
        <dbReference type="ChEBI" id="CHEBI:49883"/>
    </cofactor>
    <text evidence="1">Binds 1 [4Fe-4S] cluster.</text>
</comment>
<comment type="subunit">
    <text evidence="1">NDH-1 is composed of 14 different subunits. Subunits NuoB, C, D, E, F, and G constitute the peripheral sector of the complex.</text>
</comment>
<comment type="subcellular location">
    <subcellularLocation>
        <location evidence="1">Cell inner membrane</location>
        <topology evidence="1">Peripheral membrane protein</topology>
        <orientation evidence="1">Cytoplasmic side</orientation>
    </subcellularLocation>
</comment>
<comment type="similarity">
    <text evidence="1">Belongs to the complex I 20 kDa subunit family.</text>
</comment>
<feature type="chain" id="PRO_0000376328" description="NADH-quinone oxidoreductase subunit B 2">
    <location>
        <begin position="1"/>
        <end position="167"/>
    </location>
</feature>
<feature type="binding site" evidence="1">
    <location>
        <position position="38"/>
    </location>
    <ligand>
        <name>[4Fe-4S] cluster</name>
        <dbReference type="ChEBI" id="CHEBI:49883"/>
    </ligand>
</feature>
<feature type="binding site" evidence="1">
    <location>
        <position position="39"/>
    </location>
    <ligand>
        <name>[4Fe-4S] cluster</name>
        <dbReference type="ChEBI" id="CHEBI:49883"/>
    </ligand>
</feature>
<feature type="binding site" evidence="1">
    <location>
        <position position="103"/>
    </location>
    <ligand>
        <name>[4Fe-4S] cluster</name>
        <dbReference type="ChEBI" id="CHEBI:49883"/>
    </ligand>
</feature>
<feature type="binding site" evidence="1">
    <location>
        <position position="132"/>
    </location>
    <ligand>
        <name>[4Fe-4S] cluster</name>
        <dbReference type="ChEBI" id="CHEBI:49883"/>
    </ligand>
</feature>
<name>NUOB2_RHIE6</name>
<dbReference type="EC" id="7.1.1.-" evidence="1"/>
<dbReference type="EMBL" id="CP001074">
    <property type="protein sequence ID" value="ACE92578.1"/>
    <property type="molecule type" value="Genomic_DNA"/>
</dbReference>
<dbReference type="SMR" id="B3PY57"/>
<dbReference type="KEGG" id="rec:RHECIAT_CH0003633"/>
<dbReference type="eggNOG" id="COG0377">
    <property type="taxonomic scope" value="Bacteria"/>
</dbReference>
<dbReference type="HOGENOM" id="CLU_055737_7_3_5"/>
<dbReference type="Proteomes" id="UP000008817">
    <property type="component" value="Chromosome"/>
</dbReference>
<dbReference type="GO" id="GO:0005886">
    <property type="term" value="C:plasma membrane"/>
    <property type="evidence" value="ECO:0007669"/>
    <property type="project" value="UniProtKB-SubCell"/>
</dbReference>
<dbReference type="GO" id="GO:0045271">
    <property type="term" value="C:respiratory chain complex I"/>
    <property type="evidence" value="ECO:0007669"/>
    <property type="project" value="TreeGrafter"/>
</dbReference>
<dbReference type="GO" id="GO:0051539">
    <property type="term" value="F:4 iron, 4 sulfur cluster binding"/>
    <property type="evidence" value="ECO:0007669"/>
    <property type="project" value="UniProtKB-KW"/>
</dbReference>
<dbReference type="GO" id="GO:0005506">
    <property type="term" value="F:iron ion binding"/>
    <property type="evidence" value="ECO:0007669"/>
    <property type="project" value="UniProtKB-UniRule"/>
</dbReference>
<dbReference type="GO" id="GO:0008137">
    <property type="term" value="F:NADH dehydrogenase (ubiquinone) activity"/>
    <property type="evidence" value="ECO:0007669"/>
    <property type="project" value="InterPro"/>
</dbReference>
<dbReference type="GO" id="GO:0050136">
    <property type="term" value="F:NADH:ubiquinone reductase (non-electrogenic) activity"/>
    <property type="evidence" value="ECO:0007669"/>
    <property type="project" value="UniProtKB-UniRule"/>
</dbReference>
<dbReference type="GO" id="GO:0048038">
    <property type="term" value="F:quinone binding"/>
    <property type="evidence" value="ECO:0007669"/>
    <property type="project" value="UniProtKB-KW"/>
</dbReference>
<dbReference type="GO" id="GO:0009060">
    <property type="term" value="P:aerobic respiration"/>
    <property type="evidence" value="ECO:0007669"/>
    <property type="project" value="TreeGrafter"/>
</dbReference>
<dbReference type="GO" id="GO:0015990">
    <property type="term" value="P:electron transport coupled proton transport"/>
    <property type="evidence" value="ECO:0007669"/>
    <property type="project" value="TreeGrafter"/>
</dbReference>
<dbReference type="FunFam" id="3.40.50.12280:FF:000002">
    <property type="entry name" value="NADH-quinone oxidoreductase subunit B"/>
    <property type="match status" value="1"/>
</dbReference>
<dbReference type="Gene3D" id="3.40.50.12280">
    <property type="match status" value="1"/>
</dbReference>
<dbReference type="HAMAP" id="MF_01356">
    <property type="entry name" value="NDH1_NuoB"/>
    <property type="match status" value="1"/>
</dbReference>
<dbReference type="InterPro" id="IPR006137">
    <property type="entry name" value="NADH_UbQ_OxRdtase-like_20kDa"/>
</dbReference>
<dbReference type="InterPro" id="IPR006138">
    <property type="entry name" value="NADH_UQ_OxRdtase_20Kd_su"/>
</dbReference>
<dbReference type="NCBIfam" id="TIGR01957">
    <property type="entry name" value="nuoB_fam"/>
    <property type="match status" value="1"/>
</dbReference>
<dbReference type="NCBIfam" id="NF005012">
    <property type="entry name" value="PRK06411.1"/>
    <property type="match status" value="1"/>
</dbReference>
<dbReference type="PANTHER" id="PTHR11995">
    <property type="entry name" value="NADH DEHYDROGENASE"/>
    <property type="match status" value="1"/>
</dbReference>
<dbReference type="PANTHER" id="PTHR11995:SF14">
    <property type="entry name" value="NADH DEHYDROGENASE [UBIQUINONE] IRON-SULFUR PROTEIN 7, MITOCHONDRIAL"/>
    <property type="match status" value="1"/>
</dbReference>
<dbReference type="Pfam" id="PF01058">
    <property type="entry name" value="Oxidored_q6"/>
    <property type="match status" value="1"/>
</dbReference>
<dbReference type="SUPFAM" id="SSF56770">
    <property type="entry name" value="HydA/Nqo6-like"/>
    <property type="match status" value="1"/>
</dbReference>
<sequence>MGTVNNAIRDSVLFTTADSIINWSRSSALWPETFGIACCAIEMISAGCARYDLDRFGVVFRPSPRQSDVMIIAGTVTRKFAPVVRRLYDQMPEPRWVIAMGTCAISGGVYNTYAVVQGSETFVPVDVHVPGCPPRPEALMHGFLLLQEKIKRSRALAGTPLDRVIAS</sequence>
<proteinExistence type="inferred from homology"/>
<reference key="1">
    <citation type="journal article" date="2010" name="Appl. Environ. Microbiol.">
        <title>Conserved symbiotic plasmid DNA sequences in the multireplicon pangenomic structure of Rhizobium etli.</title>
        <authorList>
            <person name="Gonzalez V."/>
            <person name="Acosta J.L."/>
            <person name="Santamaria R.I."/>
            <person name="Bustos P."/>
            <person name="Fernandez J.L."/>
            <person name="Hernandez Gonzalez I.L."/>
            <person name="Diaz R."/>
            <person name="Flores M."/>
            <person name="Palacios R."/>
            <person name="Mora J."/>
            <person name="Davila G."/>
        </authorList>
    </citation>
    <scope>NUCLEOTIDE SEQUENCE [LARGE SCALE GENOMIC DNA]</scope>
    <source>
        <strain>CIAT 652</strain>
    </source>
</reference>
<gene>
    <name evidence="1" type="primary">nuoB2</name>
    <name type="ordered locus">RHECIAT_CH0003633</name>
</gene>